<comment type="cofactor">
    <cofactor evidence="1">
        <name>Zn(2+)</name>
        <dbReference type="ChEBI" id="CHEBI:29105"/>
    </cofactor>
</comment>
<comment type="interaction">
    <interactant intactId="EBI-5458880">
        <id>Q96GY0</id>
    </interactant>
    <interactant intactId="EBI-10276168">
        <id>Q8WTX7</id>
        <label>CASTOR1</label>
    </interactant>
    <organismsDiffer>false</organismsDiffer>
    <experiments>14</experiments>
</comment>
<comment type="interaction">
    <interactant intactId="EBI-5458880">
        <id>Q96GY0</id>
    </interactant>
    <interactant intactId="EBI-11954144">
        <id>O43439-4</id>
        <label>CBFA2T2</label>
    </interactant>
    <organismsDiffer>false</organismsDiffer>
    <experiments>3</experiments>
</comment>
<comment type="interaction">
    <interactant intactId="EBI-5458880">
        <id>Q96GY0</id>
    </interactant>
    <interactant intactId="EBI-1175354">
        <id>Q9H6Z9</id>
        <label>EGLN3</label>
    </interactant>
    <organismsDiffer>false</organismsDiffer>
    <experiments>3</experiments>
</comment>
<comment type="interaction">
    <interactant intactId="EBI-5458880">
        <id>Q96GY0</id>
    </interactant>
    <interactant intactId="EBI-742102">
        <id>Q8IYI6</id>
        <label>EXOC8</label>
    </interactant>
    <organismsDiffer>false</organismsDiffer>
    <experiments>3</experiments>
</comment>
<comment type="interaction">
    <interactant intactId="EBI-5458880">
        <id>Q96GY0</id>
    </interactant>
    <interactant intactId="EBI-742828">
        <id>Q14847</id>
        <label>LASP1</label>
    </interactant>
    <organismsDiffer>false</organismsDiffer>
    <experiments>3</experiments>
</comment>
<comment type="interaction">
    <interactant intactId="EBI-5458880">
        <id>Q96GY0</id>
    </interactant>
    <interactant intactId="EBI-726739">
        <id>Q9UPY8</id>
        <label>MAPRE3</label>
    </interactant>
    <organismsDiffer>false</organismsDiffer>
    <experiments>3</experiments>
</comment>
<comment type="interaction">
    <interactant intactId="EBI-5458880">
        <id>Q96GY0</id>
    </interactant>
    <interactant intactId="EBI-713635">
        <id>O43639</id>
        <label>NCK2</label>
    </interactant>
    <organismsDiffer>false</organismsDiffer>
    <experiments>3</experiments>
</comment>
<comment type="interaction">
    <interactant intactId="EBI-5458880">
        <id>Q96GY0</id>
    </interactant>
    <interactant intactId="EBI-948156">
        <id>Q9Y4B4</id>
        <label>RAD54L2</label>
    </interactant>
    <organismsDiffer>false</organismsDiffer>
    <experiments>3</experiments>
</comment>
<comment type="interaction">
    <interactant intactId="EBI-5458880">
        <id>Q96GY0</id>
    </interactant>
    <interactant intactId="EBI-751145">
        <id>P23497</id>
        <label>SP100</label>
    </interactant>
    <organismsDiffer>false</organismsDiffer>
    <experiments>3</experiments>
</comment>
<comment type="interaction">
    <interactant intactId="EBI-5458880">
        <id>Q96GY0</id>
    </interactant>
    <interactant intactId="EBI-515331">
        <id>P07947</id>
        <label>YES1</label>
    </interactant>
    <organismsDiffer>false</organismsDiffer>
    <experiments>3</experiments>
</comment>
<comment type="similarity">
    <text evidence="4">Belongs to the ZC2HC1 family.</text>
</comment>
<evidence type="ECO:0000255" key="1">
    <source>
        <dbReference type="PROSITE-ProRule" id="PRU01371"/>
    </source>
</evidence>
<evidence type="ECO:0000256" key="2">
    <source>
        <dbReference type="SAM" id="MobiDB-lite"/>
    </source>
</evidence>
<evidence type="ECO:0000269" key="3">
    <source>
    </source>
</evidence>
<evidence type="ECO:0000305" key="4"/>
<evidence type="ECO:0007744" key="5">
    <source>
    </source>
</evidence>
<evidence type="ECO:0007744" key="6">
    <source>
    </source>
</evidence>
<evidence type="ECO:0007744" key="7">
    <source>
    </source>
</evidence>
<gene>
    <name type="primary">ZC2HC1A</name>
    <name type="synonym">C8orf70</name>
    <name type="synonym">FAM164A</name>
    <name type="ORF">CGI-62</name>
</gene>
<reference key="1">
    <citation type="journal article" date="2000" name="Genome Res.">
        <title>Identification of novel human genes evolutionarily conserved in Caenorhabditis elegans by comparative proteomics.</title>
        <authorList>
            <person name="Lai C.-H."/>
            <person name="Chou C.-Y."/>
            <person name="Ch'ang L.-Y."/>
            <person name="Liu C.-S."/>
            <person name="Lin W.-C."/>
        </authorList>
    </citation>
    <scope>NUCLEOTIDE SEQUENCE [LARGE SCALE MRNA]</scope>
</reference>
<reference key="2">
    <citation type="journal article" date="2006" name="Nature">
        <title>DNA sequence and analysis of human chromosome 8.</title>
        <authorList>
            <person name="Nusbaum C."/>
            <person name="Mikkelsen T.S."/>
            <person name="Zody M.C."/>
            <person name="Asakawa S."/>
            <person name="Taudien S."/>
            <person name="Garber M."/>
            <person name="Kodira C.D."/>
            <person name="Schueler M.G."/>
            <person name="Shimizu A."/>
            <person name="Whittaker C.A."/>
            <person name="Chang J.L."/>
            <person name="Cuomo C.A."/>
            <person name="Dewar K."/>
            <person name="FitzGerald M.G."/>
            <person name="Yang X."/>
            <person name="Allen N.R."/>
            <person name="Anderson S."/>
            <person name="Asakawa T."/>
            <person name="Blechschmidt K."/>
            <person name="Bloom T."/>
            <person name="Borowsky M.L."/>
            <person name="Butler J."/>
            <person name="Cook A."/>
            <person name="Corum B."/>
            <person name="DeArellano K."/>
            <person name="DeCaprio D."/>
            <person name="Dooley K.T."/>
            <person name="Dorris L. III"/>
            <person name="Engels R."/>
            <person name="Gloeckner G."/>
            <person name="Hafez N."/>
            <person name="Hagopian D.S."/>
            <person name="Hall J.L."/>
            <person name="Ishikawa S.K."/>
            <person name="Jaffe D.B."/>
            <person name="Kamat A."/>
            <person name="Kudoh J."/>
            <person name="Lehmann R."/>
            <person name="Lokitsang T."/>
            <person name="Macdonald P."/>
            <person name="Major J.E."/>
            <person name="Matthews C.D."/>
            <person name="Mauceli E."/>
            <person name="Menzel U."/>
            <person name="Mihalev A.H."/>
            <person name="Minoshima S."/>
            <person name="Murayama Y."/>
            <person name="Naylor J.W."/>
            <person name="Nicol R."/>
            <person name="Nguyen C."/>
            <person name="O'Leary S.B."/>
            <person name="O'Neill K."/>
            <person name="Parker S.C.J."/>
            <person name="Polley A."/>
            <person name="Raymond C.K."/>
            <person name="Reichwald K."/>
            <person name="Rodriguez J."/>
            <person name="Sasaki T."/>
            <person name="Schilhabel M."/>
            <person name="Siddiqui R."/>
            <person name="Smith C.L."/>
            <person name="Sneddon T.P."/>
            <person name="Talamas J.A."/>
            <person name="Tenzin P."/>
            <person name="Topham K."/>
            <person name="Venkataraman V."/>
            <person name="Wen G."/>
            <person name="Yamazaki S."/>
            <person name="Young S.K."/>
            <person name="Zeng Q."/>
            <person name="Zimmer A.R."/>
            <person name="Rosenthal A."/>
            <person name="Birren B.W."/>
            <person name="Platzer M."/>
            <person name="Shimizu N."/>
            <person name="Lander E.S."/>
        </authorList>
    </citation>
    <scope>NUCLEOTIDE SEQUENCE [LARGE SCALE GENOMIC DNA]</scope>
</reference>
<reference key="3">
    <citation type="journal article" date="2004" name="Genome Res.">
        <title>The status, quality, and expansion of the NIH full-length cDNA project: the Mammalian Gene Collection (MGC).</title>
        <authorList>
            <consortium name="The MGC Project Team"/>
        </authorList>
    </citation>
    <scope>NUCLEOTIDE SEQUENCE [LARGE SCALE MRNA]</scope>
    <scope>VARIANT ALA-156</scope>
    <source>
        <tissue>Eye</tissue>
    </source>
</reference>
<reference key="4">
    <citation type="journal article" date="2008" name="Proc. Natl. Acad. Sci. U.S.A.">
        <title>A quantitative atlas of mitotic phosphorylation.</title>
        <authorList>
            <person name="Dephoure N."/>
            <person name="Zhou C."/>
            <person name="Villen J."/>
            <person name="Beausoleil S.A."/>
            <person name="Bakalarski C.E."/>
            <person name="Elledge S.J."/>
            <person name="Gygi S.P."/>
        </authorList>
    </citation>
    <scope>PHOSPHORYLATION [LARGE SCALE ANALYSIS] AT THR-244</scope>
    <scope>IDENTIFICATION BY MASS SPECTROMETRY [LARGE SCALE ANALYSIS]</scope>
    <source>
        <tissue>Cervix carcinoma</tissue>
    </source>
</reference>
<reference key="5">
    <citation type="journal article" date="2010" name="Sci. Signal.">
        <title>Quantitative phosphoproteomics reveals widespread full phosphorylation site occupancy during mitosis.</title>
        <authorList>
            <person name="Olsen J.V."/>
            <person name="Vermeulen M."/>
            <person name="Santamaria A."/>
            <person name="Kumar C."/>
            <person name="Miller M.L."/>
            <person name="Jensen L.J."/>
            <person name="Gnad F."/>
            <person name="Cox J."/>
            <person name="Jensen T.S."/>
            <person name="Nigg E.A."/>
            <person name="Brunak S."/>
            <person name="Mann M."/>
        </authorList>
    </citation>
    <scope>PHOSPHORYLATION [LARGE SCALE ANALYSIS] AT SER-292</scope>
    <scope>IDENTIFICATION BY MASS SPECTROMETRY [LARGE SCALE ANALYSIS]</scope>
    <source>
        <tissue>Cervix carcinoma</tissue>
    </source>
</reference>
<reference key="6">
    <citation type="journal article" date="2013" name="J. Proteome Res.">
        <title>Toward a comprehensive characterization of a human cancer cell phosphoproteome.</title>
        <authorList>
            <person name="Zhou H."/>
            <person name="Di Palma S."/>
            <person name="Preisinger C."/>
            <person name="Peng M."/>
            <person name="Polat A.N."/>
            <person name="Heck A.J."/>
            <person name="Mohammed S."/>
        </authorList>
    </citation>
    <scope>PHOSPHORYLATION [LARGE SCALE ANALYSIS] AT SER-223</scope>
    <scope>IDENTIFICATION BY MASS SPECTROMETRY [LARGE SCALE ANALYSIS]</scope>
    <source>
        <tissue>Cervix carcinoma</tissue>
    </source>
</reference>
<protein>
    <recommendedName>
        <fullName>Zinc finger C2HC domain-containing protein 1A</fullName>
    </recommendedName>
</protein>
<dbReference type="EMBL" id="AF151820">
    <property type="protein sequence ID" value="AAD34057.1"/>
    <property type="molecule type" value="mRNA"/>
</dbReference>
<dbReference type="EMBL" id="AC100854">
    <property type="status" value="NOT_ANNOTATED_CDS"/>
    <property type="molecule type" value="Genomic_DNA"/>
</dbReference>
<dbReference type="EMBL" id="BC009074">
    <property type="protein sequence ID" value="AAH09074.1"/>
    <property type="molecule type" value="mRNA"/>
</dbReference>
<dbReference type="CCDS" id="CCDS6223.1"/>
<dbReference type="RefSeq" id="NP_057094.2">
    <property type="nucleotide sequence ID" value="NM_016010.3"/>
</dbReference>
<dbReference type="BioGRID" id="119290">
    <property type="interactions" value="105"/>
</dbReference>
<dbReference type="FunCoup" id="Q96GY0">
    <property type="interactions" value="1177"/>
</dbReference>
<dbReference type="IntAct" id="Q96GY0">
    <property type="interactions" value="40"/>
</dbReference>
<dbReference type="MINT" id="Q96GY0"/>
<dbReference type="STRING" id="9606.ENSP00000263849"/>
<dbReference type="GlyGen" id="Q96GY0">
    <property type="glycosylation" value="3 sites, 1 O-linked glycan (3 sites)"/>
</dbReference>
<dbReference type="iPTMnet" id="Q96GY0"/>
<dbReference type="PhosphoSitePlus" id="Q96GY0"/>
<dbReference type="BioMuta" id="ZC2HC1A"/>
<dbReference type="DMDM" id="296434498"/>
<dbReference type="jPOST" id="Q96GY0"/>
<dbReference type="MassIVE" id="Q96GY0"/>
<dbReference type="PaxDb" id="9606-ENSP00000263849"/>
<dbReference type="PeptideAtlas" id="Q96GY0"/>
<dbReference type="ProteomicsDB" id="76682"/>
<dbReference type="Pumba" id="Q96GY0"/>
<dbReference type="Antibodypedia" id="12394">
    <property type="antibodies" value="283 antibodies from 19 providers"/>
</dbReference>
<dbReference type="DNASU" id="51101"/>
<dbReference type="Ensembl" id="ENST00000263849.9">
    <property type="protein sequence ID" value="ENSP00000263849.3"/>
    <property type="gene ID" value="ENSG00000104427.13"/>
</dbReference>
<dbReference type="GeneID" id="51101"/>
<dbReference type="KEGG" id="hsa:51101"/>
<dbReference type="MANE-Select" id="ENST00000263849.9">
    <property type="protein sequence ID" value="ENSP00000263849.3"/>
    <property type="RefSeq nucleotide sequence ID" value="NM_016010.3"/>
    <property type="RefSeq protein sequence ID" value="NP_057094.2"/>
</dbReference>
<dbReference type="UCSC" id="uc003ybd.4">
    <property type="organism name" value="human"/>
</dbReference>
<dbReference type="AGR" id="HGNC:24277"/>
<dbReference type="CTD" id="51101"/>
<dbReference type="DisGeNET" id="51101"/>
<dbReference type="GeneCards" id="ZC2HC1A"/>
<dbReference type="HGNC" id="HGNC:24277">
    <property type="gene designation" value="ZC2HC1A"/>
</dbReference>
<dbReference type="HPA" id="ENSG00000104427">
    <property type="expression patterns" value="Low tissue specificity"/>
</dbReference>
<dbReference type="neXtProt" id="NX_Q96GY0"/>
<dbReference type="OpenTargets" id="ENSG00000104427"/>
<dbReference type="PharmGKB" id="PA162386952"/>
<dbReference type="VEuPathDB" id="HostDB:ENSG00000104427"/>
<dbReference type="eggNOG" id="KOG3940">
    <property type="taxonomic scope" value="Eukaryota"/>
</dbReference>
<dbReference type="GeneTree" id="ENSGT00940000159419"/>
<dbReference type="HOGENOM" id="CLU_855170_0_0_1"/>
<dbReference type="InParanoid" id="Q96GY0"/>
<dbReference type="OMA" id="ARHEQIC"/>
<dbReference type="OrthoDB" id="10066537at2759"/>
<dbReference type="PAN-GO" id="Q96GY0">
    <property type="GO annotations" value="0 GO annotations based on evolutionary models"/>
</dbReference>
<dbReference type="PhylomeDB" id="Q96GY0"/>
<dbReference type="TreeFam" id="TF319585"/>
<dbReference type="PathwayCommons" id="Q96GY0"/>
<dbReference type="SignaLink" id="Q96GY0"/>
<dbReference type="BioGRID-ORCS" id="51101">
    <property type="hits" value="19 hits in 1158 CRISPR screens"/>
</dbReference>
<dbReference type="GenomeRNAi" id="51101"/>
<dbReference type="Pharos" id="Q96GY0">
    <property type="development level" value="Tdark"/>
</dbReference>
<dbReference type="PRO" id="PR:Q96GY0"/>
<dbReference type="Proteomes" id="UP000005640">
    <property type="component" value="Chromosome 8"/>
</dbReference>
<dbReference type="RNAct" id="Q96GY0">
    <property type="molecule type" value="protein"/>
</dbReference>
<dbReference type="Bgee" id="ENSG00000104427">
    <property type="expression patterns" value="Expressed in cortical plate and 207 other cell types or tissues"/>
</dbReference>
<dbReference type="ExpressionAtlas" id="Q96GY0">
    <property type="expression patterns" value="baseline and differential"/>
</dbReference>
<dbReference type="GO" id="GO:0008270">
    <property type="term" value="F:zinc ion binding"/>
    <property type="evidence" value="ECO:0007669"/>
    <property type="project" value="UniProtKB-KW"/>
</dbReference>
<dbReference type="Gene3D" id="3.30.160.60">
    <property type="entry name" value="Classic Zinc Finger"/>
    <property type="match status" value="1"/>
</dbReference>
<dbReference type="InterPro" id="IPR026319">
    <property type="entry name" value="ZC2HC1A/B-like"/>
</dbReference>
<dbReference type="InterPro" id="IPR049899">
    <property type="entry name" value="Znf_C2HC_C3H"/>
</dbReference>
<dbReference type="PANTHER" id="PTHR13555">
    <property type="entry name" value="C2H2 ZINC FINGER CGI-62-RELATED"/>
    <property type="match status" value="1"/>
</dbReference>
<dbReference type="PANTHER" id="PTHR13555:SF25">
    <property type="entry name" value="ZINC FINGER C2HC DOMAIN-CONTAINING PROTEIN 1A"/>
    <property type="match status" value="1"/>
</dbReference>
<dbReference type="Pfam" id="PF13913">
    <property type="entry name" value="zf-C2HC_2"/>
    <property type="match status" value="2"/>
</dbReference>
<dbReference type="PROSITE" id="PS52027">
    <property type="entry name" value="ZF_C2HC_C3H"/>
    <property type="match status" value="2"/>
</dbReference>
<feature type="chain" id="PRO_0000280246" description="Zinc finger C2HC domain-containing protein 1A">
    <location>
        <begin position="1"/>
        <end position="325"/>
    </location>
</feature>
<feature type="zinc finger region" description="C2HC/C3H-type 1" evidence="1">
    <location>
        <begin position="15"/>
        <end position="44"/>
    </location>
</feature>
<feature type="zinc finger region" description="C2HC/C3H-type 2" evidence="1">
    <location>
        <begin position="118"/>
        <end position="147"/>
    </location>
</feature>
<feature type="region of interest" description="Disordered" evidence="2">
    <location>
        <begin position="43"/>
        <end position="83"/>
    </location>
</feature>
<feature type="region of interest" description="Disordered" evidence="2">
    <location>
        <begin position="150"/>
        <end position="260"/>
    </location>
</feature>
<feature type="compositionally biased region" description="Basic and acidic residues" evidence="2">
    <location>
        <begin position="48"/>
        <end position="58"/>
    </location>
</feature>
<feature type="compositionally biased region" description="Low complexity" evidence="2">
    <location>
        <begin position="177"/>
        <end position="188"/>
    </location>
</feature>
<feature type="compositionally biased region" description="Low complexity" evidence="2">
    <location>
        <begin position="197"/>
        <end position="216"/>
    </location>
</feature>
<feature type="binding site" evidence="1">
    <location>
        <position position="19"/>
    </location>
    <ligand>
        <name>Zn(2+)</name>
        <dbReference type="ChEBI" id="CHEBI:29105"/>
        <label>1</label>
    </ligand>
</feature>
<feature type="binding site" evidence="1">
    <location>
        <position position="22"/>
    </location>
    <ligand>
        <name>Zn(2+)</name>
        <dbReference type="ChEBI" id="CHEBI:29105"/>
        <label>1</label>
    </ligand>
</feature>
<feature type="binding site" evidence="1">
    <location>
        <position position="34"/>
    </location>
    <ligand>
        <name>Zn(2+)</name>
        <dbReference type="ChEBI" id="CHEBI:29105"/>
        <label>1</label>
    </ligand>
</feature>
<feature type="binding site" evidence="1">
    <location>
        <position position="38"/>
    </location>
    <ligand>
        <name>Zn(2+)</name>
        <dbReference type="ChEBI" id="CHEBI:29105"/>
        <label>1</label>
    </ligand>
</feature>
<feature type="binding site" evidence="1">
    <location>
        <position position="122"/>
    </location>
    <ligand>
        <name>Zn(2+)</name>
        <dbReference type="ChEBI" id="CHEBI:29105"/>
        <label>2</label>
    </ligand>
</feature>
<feature type="binding site" evidence="1">
    <location>
        <position position="125"/>
    </location>
    <ligand>
        <name>Zn(2+)</name>
        <dbReference type="ChEBI" id="CHEBI:29105"/>
        <label>2</label>
    </ligand>
</feature>
<feature type="binding site" evidence="1">
    <location>
        <position position="137"/>
    </location>
    <ligand>
        <name>Zn(2+)</name>
        <dbReference type="ChEBI" id="CHEBI:29105"/>
        <label>2</label>
    </ligand>
</feature>
<feature type="binding site" evidence="1">
    <location>
        <position position="141"/>
    </location>
    <ligand>
        <name>Zn(2+)</name>
        <dbReference type="ChEBI" id="CHEBI:29105"/>
        <label>2</label>
    </ligand>
</feature>
<feature type="modified residue" description="Phosphoserine" evidence="7">
    <location>
        <position position="223"/>
    </location>
</feature>
<feature type="modified residue" description="Phosphothreonine" evidence="5">
    <location>
        <position position="244"/>
    </location>
</feature>
<feature type="modified residue" description="Phosphoserine" evidence="6">
    <location>
        <position position="292"/>
    </location>
</feature>
<feature type="sequence variant" id="VAR_031102" description="In dbSNP:rs17850447." evidence="3">
    <original>T</original>
    <variation>A</variation>
    <location>
        <position position="156"/>
    </location>
</feature>
<feature type="sequence conflict" description="In Ref. 1; AAD34057." evidence="4" ref="1">
    <original>K</original>
    <variation>E</variation>
    <location>
        <position position="151"/>
    </location>
</feature>
<feature type="sequence conflict" description="In Ref. 1; AAD34057." evidence="4" ref="1">
    <original>K</original>
    <variation>E</variation>
    <location>
        <position position="153"/>
    </location>
</feature>
<feature type="sequence conflict" description="In Ref. 1; AAD34057." evidence="4" ref="1">
    <original>T</original>
    <variation>S</variation>
    <location>
        <position position="163"/>
    </location>
</feature>
<name>ZC21A_HUMAN</name>
<sequence>MEGLEENGGVVQVGELLPCKICGRTFFPVALKKHGPICQKTATKKRKTFDSSRQRAEGTDIPTVKPLKPRPEPPKKPSNWRRKHEEFIATIRAAKGLDQALKEGGKLPPPPPPSYDPDYIQCPYCQRRFNENAADRHINFCKEQAARISNKGKFSTDTKGKPTSRTQVYKPPALKKSNSPGTASSGSSRLPQPSGAGKTVVGVPSGKVSSSSSSLGNKLQTLSPSHKGIAAPHAGANVKPRNSTPPSLARNPAPGVLTNKRKTYTESYIARPDGDCASSLNGGNIKGIEGHSPGNLPKFCHECGTKYPVEWAKFCCECGIRRMIL</sequence>
<organism>
    <name type="scientific">Homo sapiens</name>
    <name type="common">Human</name>
    <dbReference type="NCBI Taxonomy" id="9606"/>
    <lineage>
        <taxon>Eukaryota</taxon>
        <taxon>Metazoa</taxon>
        <taxon>Chordata</taxon>
        <taxon>Craniata</taxon>
        <taxon>Vertebrata</taxon>
        <taxon>Euteleostomi</taxon>
        <taxon>Mammalia</taxon>
        <taxon>Eutheria</taxon>
        <taxon>Euarchontoglires</taxon>
        <taxon>Primates</taxon>
        <taxon>Haplorrhini</taxon>
        <taxon>Catarrhini</taxon>
        <taxon>Hominidae</taxon>
        <taxon>Homo</taxon>
    </lineage>
</organism>
<proteinExistence type="evidence at protein level"/>
<keyword id="KW-0479">Metal-binding</keyword>
<keyword id="KW-0597">Phosphoprotein</keyword>
<keyword id="KW-1267">Proteomics identification</keyword>
<keyword id="KW-1185">Reference proteome</keyword>
<keyword id="KW-0677">Repeat</keyword>
<keyword id="KW-0862">Zinc</keyword>
<keyword id="KW-0863">Zinc-finger</keyword>
<accession>Q96GY0</accession>
<accession>Q9Y372</accession>